<protein>
    <recommendedName>
        <fullName>NADH-ubiquinone oxidoreductase chain 4</fullName>
        <ecNumber>7.1.1.2</ecNumber>
    </recommendedName>
    <alternativeName>
        <fullName>NADH dehydrogenase subunit 4</fullName>
    </alternativeName>
</protein>
<accession>O79555</accession>
<evidence type="ECO:0000250" key="1"/>
<evidence type="ECO:0000255" key="2"/>
<evidence type="ECO:0000305" key="3"/>
<feature type="chain" id="PRO_0000117929" description="NADH-ubiquinone oxidoreductase chain 4">
    <location>
        <begin position="1"/>
        <end position="445"/>
    </location>
</feature>
<feature type="transmembrane region" description="Helical" evidence="2">
    <location>
        <begin position="22"/>
        <end position="42"/>
    </location>
</feature>
<feature type="transmembrane region" description="Helical" evidence="2">
    <location>
        <begin position="54"/>
        <end position="74"/>
    </location>
</feature>
<feature type="transmembrane region" description="Helical" evidence="2">
    <location>
        <begin position="87"/>
        <end position="107"/>
    </location>
</feature>
<feature type="transmembrane region" description="Helical" evidence="2">
    <location>
        <begin position="108"/>
        <end position="128"/>
    </location>
</feature>
<feature type="transmembrane region" description="Helical" evidence="2">
    <location>
        <begin position="141"/>
        <end position="161"/>
    </location>
</feature>
<feature type="transmembrane region" description="Helical" evidence="2">
    <location>
        <begin position="186"/>
        <end position="206"/>
    </location>
</feature>
<feature type="transmembrane region" description="Helical" evidence="2">
    <location>
        <begin position="215"/>
        <end position="235"/>
    </location>
</feature>
<feature type="transmembrane region" description="Helical" evidence="2">
    <location>
        <begin position="248"/>
        <end position="268"/>
    </location>
</feature>
<feature type="transmembrane region" description="Helical" evidence="2">
    <location>
        <begin position="276"/>
        <end position="296"/>
    </location>
</feature>
<feature type="transmembrane region" description="Helical" evidence="2">
    <location>
        <begin position="300"/>
        <end position="320"/>
    </location>
</feature>
<feature type="transmembrane region" description="Helical" evidence="2">
    <location>
        <begin position="332"/>
        <end position="352"/>
    </location>
</feature>
<feature type="transmembrane region" description="Helical" evidence="2">
    <location>
        <begin position="383"/>
        <end position="403"/>
    </location>
</feature>
<feature type="transmembrane region" description="Helical" evidence="2">
    <location>
        <begin position="425"/>
        <end position="445"/>
    </location>
</feature>
<sequence>MLKITFMTMMLIPTTLILKPKMLYQTTTSYSFMIALFSLSLLEPNSNTYLHLDSTSAPLLLLSYWLMPMTMMASQHAMNKEPLQRQRTFLSILTLLQLFISLTFMASNITLMYIMFEATLIPTLIIITRWGQQTERLTAGTYFMMYTLTTSMPLLTAILFINNTTNTPTLFMQMMQTTSPWTELMLWIACLGAFLAKMPVYGLHLWLPKAHVEAPIAGSMVLAAILLKLGGYGIIRMTQILPTMKTDLFLPFIVLSLWGATLANLTCLQQTDLKSLIAYSSVSHMGLVIAATMIQTQWSLSGAMALMIAHGFTSSALFCLANTTYERTKTRIMILTRGFHSILPMITTWWLMTNLMNIATPPSINFTGELLIASSLFNWCPTTIILFGLSMLITASYSLHMLLSTQTGTPTLNMVTYPTHSREHLLMVLHILPLMLISLKPELII</sequence>
<organism>
    <name type="scientific">Lycodon semicarinatus</name>
    <name type="common">Ryukyu odd-tooth snake</name>
    <name type="synonym">Eumesodon semicarinatus</name>
    <dbReference type="NCBI Taxonomy" id="56549"/>
    <lineage>
        <taxon>Eukaryota</taxon>
        <taxon>Metazoa</taxon>
        <taxon>Chordata</taxon>
        <taxon>Craniata</taxon>
        <taxon>Vertebrata</taxon>
        <taxon>Euteleostomi</taxon>
        <taxon>Lepidosauria</taxon>
        <taxon>Squamata</taxon>
        <taxon>Bifurcata</taxon>
        <taxon>Unidentata</taxon>
        <taxon>Episquamata</taxon>
        <taxon>Toxicofera</taxon>
        <taxon>Serpentes</taxon>
        <taxon>Colubroidea</taxon>
        <taxon>Colubridae</taxon>
        <taxon>Colubrinae</taxon>
        <taxon>Lycodon</taxon>
    </lineage>
</organism>
<geneLocation type="mitochondrion"/>
<name>NU4M_LYCSM</name>
<keyword id="KW-0249">Electron transport</keyword>
<keyword id="KW-0472">Membrane</keyword>
<keyword id="KW-0496">Mitochondrion</keyword>
<keyword id="KW-0520">NAD</keyword>
<keyword id="KW-0679">Respiratory chain</keyword>
<keyword id="KW-1278">Translocase</keyword>
<keyword id="KW-0812">Transmembrane</keyword>
<keyword id="KW-1133">Transmembrane helix</keyword>
<keyword id="KW-0813">Transport</keyword>
<keyword id="KW-0830">Ubiquinone</keyword>
<dbReference type="EC" id="7.1.1.2"/>
<dbReference type="EMBL" id="AB008539">
    <property type="protein sequence ID" value="BAA33031.1"/>
    <property type="molecule type" value="Genomic_DNA"/>
</dbReference>
<dbReference type="PIR" id="T11097">
    <property type="entry name" value="T11097"/>
</dbReference>
<dbReference type="RefSeq" id="NP_008428.1">
    <property type="nucleotide sequence ID" value="NC_001945.1"/>
</dbReference>
<dbReference type="SMR" id="O79555"/>
<dbReference type="GeneID" id="808275"/>
<dbReference type="CTD" id="4538"/>
<dbReference type="GO" id="GO:0031966">
    <property type="term" value="C:mitochondrial membrane"/>
    <property type="evidence" value="ECO:0007669"/>
    <property type="project" value="UniProtKB-SubCell"/>
</dbReference>
<dbReference type="GO" id="GO:0008137">
    <property type="term" value="F:NADH dehydrogenase (ubiquinone) activity"/>
    <property type="evidence" value="ECO:0007669"/>
    <property type="project" value="UniProtKB-EC"/>
</dbReference>
<dbReference type="GO" id="GO:0048039">
    <property type="term" value="F:ubiquinone binding"/>
    <property type="evidence" value="ECO:0007669"/>
    <property type="project" value="TreeGrafter"/>
</dbReference>
<dbReference type="GO" id="GO:0042773">
    <property type="term" value="P:ATP synthesis coupled electron transport"/>
    <property type="evidence" value="ECO:0007669"/>
    <property type="project" value="InterPro"/>
</dbReference>
<dbReference type="GO" id="GO:0015990">
    <property type="term" value="P:electron transport coupled proton transport"/>
    <property type="evidence" value="ECO:0007669"/>
    <property type="project" value="TreeGrafter"/>
</dbReference>
<dbReference type="InterPro" id="IPR000260">
    <property type="entry name" value="NADH4_N"/>
</dbReference>
<dbReference type="InterPro" id="IPR010227">
    <property type="entry name" value="NADH_Q_OxRdtase_chainM/4"/>
</dbReference>
<dbReference type="InterPro" id="IPR003918">
    <property type="entry name" value="NADH_UbQ_OxRdtase"/>
</dbReference>
<dbReference type="InterPro" id="IPR001750">
    <property type="entry name" value="ND/Mrp_TM"/>
</dbReference>
<dbReference type="NCBIfam" id="TIGR01972">
    <property type="entry name" value="NDH_I_M"/>
    <property type="match status" value="1"/>
</dbReference>
<dbReference type="PANTHER" id="PTHR43507">
    <property type="entry name" value="NADH-UBIQUINONE OXIDOREDUCTASE CHAIN 4"/>
    <property type="match status" value="1"/>
</dbReference>
<dbReference type="PANTHER" id="PTHR43507:SF20">
    <property type="entry name" value="NADH-UBIQUINONE OXIDOREDUCTASE CHAIN 4"/>
    <property type="match status" value="1"/>
</dbReference>
<dbReference type="Pfam" id="PF01059">
    <property type="entry name" value="Oxidored_q5_N"/>
    <property type="match status" value="1"/>
</dbReference>
<dbReference type="Pfam" id="PF00361">
    <property type="entry name" value="Proton_antipo_M"/>
    <property type="match status" value="1"/>
</dbReference>
<dbReference type="PRINTS" id="PR01437">
    <property type="entry name" value="NUOXDRDTASE4"/>
</dbReference>
<comment type="function">
    <text evidence="1">Core subunit of the mitochondrial membrane respiratory chain NADH dehydrogenase (Complex I) that is believed to belong to the minimal assembly required for catalysis. Complex I functions in the transfer of electrons from NADH to the respiratory chain. The immediate electron acceptor for the enzyme is believed to be ubiquinone (By similarity).</text>
</comment>
<comment type="catalytic activity">
    <reaction>
        <text>a ubiquinone + NADH + 5 H(+)(in) = a ubiquinol + NAD(+) + 4 H(+)(out)</text>
        <dbReference type="Rhea" id="RHEA:29091"/>
        <dbReference type="Rhea" id="RHEA-COMP:9565"/>
        <dbReference type="Rhea" id="RHEA-COMP:9566"/>
        <dbReference type="ChEBI" id="CHEBI:15378"/>
        <dbReference type="ChEBI" id="CHEBI:16389"/>
        <dbReference type="ChEBI" id="CHEBI:17976"/>
        <dbReference type="ChEBI" id="CHEBI:57540"/>
        <dbReference type="ChEBI" id="CHEBI:57945"/>
        <dbReference type="EC" id="7.1.1.2"/>
    </reaction>
</comment>
<comment type="subcellular location">
    <subcellularLocation>
        <location evidence="1">Mitochondrion membrane</location>
        <topology evidence="1">Multi-pass membrane protein</topology>
    </subcellularLocation>
</comment>
<comment type="similarity">
    <text evidence="3">Belongs to the complex I subunit 4 family.</text>
</comment>
<proteinExistence type="inferred from homology"/>
<gene>
    <name type="primary">MT-ND4</name>
    <name type="synonym">MTND4</name>
    <name type="synonym">NADH4</name>
    <name type="synonym">ND4</name>
</gene>
<reference key="1">
    <citation type="journal article" date="1998" name="Genetics">
        <title>The complete nucleotide sequence of a snake (Dinodon semicarinatus) mitochondrial genome with two identical control regions.</title>
        <authorList>
            <person name="Kumazawa Y."/>
            <person name="Ota H."/>
            <person name="Nishida M."/>
            <person name="Ozawa T."/>
        </authorList>
    </citation>
    <scope>NUCLEOTIDE SEQUENCE [GENOMIC DNA]</scope>
    <source>
        <tissue>Liver</tissue>
    </source>
</reference>